<keyword id="KW-0156">Chromatin regulator</keyword>
<keyword id="KW-0217">Developmental protein</keyword>
<keyword id="KW-0221">Differentiation</keyword>
<keyword id="KW-0287">Flowering</keyword>
<keyword id="KW-0489">Methyltransferase</keyword>
<keyword id="KW-1185">Reference proteome</keyword>
<keyword id="KW-0949">S-adenosyl-L-methionine</keyword>
<keyword id="KW-0804">Transcription</keyword>
<keyword id="KW-0805">Transcription regulation</keyword>
<keyword id="KW-0808">Transferase</keyword>
<accession>Q5VN06</accession>
<proteinExistence type="evidence at protein level"/>
<gene>
    <name evidence="10" type="primary">CLF</name>
    <name evidence="12" type="synonym">SDG711</name>
    <name evidence="17" type="ordered locus">Os06g0275500</name>
    <name evidence="13" type="ordered locus">LOC_Os06g16390</name>
    <name evidence="15" type="ORF">P0038C05.29</name>
    <name evidence="16" type="ORF">P0676F10.40</name>
</gene>
<evidence type="ECO:0000255" key="1">
    <source>
        <dbReference type="PROSITE-ProRule" id="PRU00190"/>
    </source>
</evidence>
<evidence type="ECO:0000255" key="2">
    <source>
        <dbReference type="PROSITE-ProRule" id="PRU00909"/>
    </source>
</evidence>
<evidence type="ECO:0000255" key="3">
    <source>
        <dbReference type="PROSITE-ProRule" id="PRU00970"/>
    </source>
</evidence>
<evidence type="ECO:0000256" key="4">
    <source>
        <dbReference type="SAM" id="MobiDB-lite"/>
    </source>
</evidence>
<evidence type="ECO:0000269" key="5">
    <source>
    </source>
</evidence>
<evidence type="ECO:0000269" key="6">
    <source>
    </source>
</evidence>
<evidence type="ECO:0000269" key="7">
    <source>
    </source>
</evidence>
<evidence type="ECO:0000269" key="8">
    <source>
    </source>
</evidence>
<evidence type="ECO:0000269" key="9">
    <source>
    </source>
</evidence>
<evidence type="ECO:0000303" key="10">
    <source>
    </source>
</evidence>
<evidence type="ECO:0000303" key="11">
    <source>
    </source>
</evidence>
<evidence type="ECO:0000303" key="12">
    <source>
    </source>
</evidence>
<evidence type="ECO:0000305" key="13"/>
<evidence type="ECO:0000305" key="14">
    <source>
    </source>
</evidence>
<evidence type="ECO:0000312" key="15">
    <source>
        <dbReference type="EMBL" id="BAD68028.1"/>
    </source>
</evidence>
<evidence type="ECO:0000312" key="16">
    <source>
        <dbReference type="EMBL" id="BAD69169.1"/>
    </source>
</evidence>
<evidence type="ECO:0000312" key="17">
    <source>
        <dbReference type="EMBL" id="BAF19293.1"/>
    </source>
</evidence>
<dbReference type="EC" id="2.1.1.356" evidence="2"/>
<dbReference type="EMBL" id="AP003044">
    <property type="protein sequence ID" value="BAD68028.1"/>
    <property type="molecule type" value="Genomic_DNA"/>
</dbReference>
<dbReference type="EMBL" id="AP005813">
    <property type="protein sequence ID" value="BAD69169.1"/>
    <property type="molecule type" value="Genomic_DNA"/>
</dbReference>
<dbReference type="EMBL" id="AP008212">
    <property type="protein sequence ID" value="BAF19293.1"/>
    <property type="molecule type" value="Genomic_DNA"/>
</dbReference>
<dbReference type="EMBL" id="AP014962">
    <property type="protein sequence ID" value="BAS97226.1"/>
    <property type="molecule type" value="Genomic_DNA"/>
</dbReference>
<dbReference type="SMR" id="Q5VN06"/>
<dbReference type="FunCoup" id="Q5VN06">
    <property type="interactions" value="988"/>
</dbReference>
<dbReference type="STRING" id="39947.Q5VN06"/>
<dbReference type="PaxDb" id="39947-Q5VN06"/>
<dbReference type="EnsemblPlants" id="Os06t0275500-01">
    <property type="protein sequence ID" value="Os06t0275500-01"/>
    <property type="gene ID" value="Os06g0275500"/>
</dbReference>
<dbReference type="Gramene" id="Os06t0275500-01">
    <property type="protein sequence ID" value="Os06t0275500-01"/>
    <property type="gene ID" value="Os06g0275500"/>
</dbReference>
<dbReference type="KEGG" id="dosa:Os06g0275500"/>
<dbReference type="KEGG" id="osa:4340748"/>
<dbReference type="eggNOG" id="KOG1079">
    <property type="taxonomic scope" value="Eukaryota"/>
</dbReference>
<dbReference type="HOGENOM" id="CLU_011060_0_0_1"/>
<dbReference type="InParanoid" id="Q5VN06"/>
<dbReference type="OMA" id="RKEECVD"/>
<dbReference type="OrthoDB" id="6141102at2759"/>
<dbReference type="Proteomes" id="UP000000763">
    <property type="component" value="Chromosome 6"/>
</dbReference>
<dbReference type="Proteomes" id="UP000059680">
    <property type="component" value="Chromosome 6"/>
</dbReference>
<dbReference type="GO" id="GO:0005677">
    <property type="term" value="C:chromatin silencing complex"/>
    <property type="evidence" value="ECO:0000314"/>
    <property type="project" value="UniProtKB"/>
</dbReference>
<dbReference type="GO" id="GO:0005634">
    <property type="term" value="C:nucleus"/>
    <property type="evidence" value="ECO:0000318"/>
    <property type="project" value="GO_Central"/>
</dbReference>
<dbReference type="GO" id="GO:0031519">
    <property type="term" value="C:PcG protein complex"/>
    <property type="evidence" value="ECO:0000314"/>
    <property type="project" value="UniProtKB"/>
</dbReference>
<dbReference type="GO" id="GO:0003682">
    <property type="term" value="F:chromatin binding"/>
    <property type="evidence" value="ECO:0000318"/>
    <property type="project" value="GO_Central"/>
</dbReference>
<dbReference type="GO" id="GO:0046976">
    <property type="term" value="F:histone H3K27 methyltransferase activity"/>
    <property type="evidence" value="ECO:0000315"/>
    <property type="project" value="UniProtKB"/>
</dbReference>
<dbReference type="GO" id="GO:0140951">
    <property type="term" value="F:histone H3K27 trimethyltransferase activity"/>
    <property type="evidence" value="ECO:0007669"/>
    <property type="project" value="UniProtKB-EC"/>
</dbReference>
<dbReference type="GO" id="GO:0030154">
    <property type="term" value="P:cell differentiation"/>
    <property type="evidence" value="ECO:0007669"/>
    <property type="project" value="UniProtKB-KW"/>
</dbReference>
<dbReference type="GO" id="GO:0009908">
    <property type="term" value="P:flower development"/>
    <property type="evidence" value="ECO:0007669"/>
    <property type="project" value="UniProtKB-KW"/>
</dbReference>
<dbReference type="GO" id="GO:0031507">
    <property type="term" value="P:heterochromatin formation"/>
    <property type="evidence" value="ECO:0000315"/>
    <property type="project" value="UniProtKB"/>
</dbReference>
<dbReference type="GO" id="GO:0032259">
    <property type="term" value="P:methylation"/>
    <property type="evidence" value="ECO:0007669"/>
    <property type="project" value="UniProtKB-KW"/>
</dbReference>
<dbReference type="GO" id="GO:0048586">
    <property type="term" value="P:regulation of long-day photoperiodism, flowering"/>
    <property type="evidence" value="ECO:0000315"/>
    <property type="project" value="UniProtKB"/>
</dbReference>
<dbReference type="CDD" id="cd10519">
    <property type="entry name" value="SET_EZH"/>
    <property type="match status" value="1"/>
</dbReference>
<dbReference type="FunFam" id="2.170.270.10:FF:000001">
    <property type="entry name" value="Putative histone-lysine N-methyltransferase EZH2"/>
    <property type="match status" value="1"/>
</dbReference>
<dbReference type="Gene3D" id="2.170.270.10">
    <property type="entry name" value="SET domain"/>
    <property type="match status" value="1"/>
</dbReference>
<dbReference type="InterPro" id="IPR026489">
    <property type="entry name" value="CXC_dom"/>
</dbReference>
<dbReference type="InterPro" id="IPR045318">
    <property type="entry name" value="EZH1/2-like"/>
</dbReference>
<dbReference type="InterPro" id="IPR025778">
    <property type="entry name" value="Hist-Lys_N-MeTrfase_plant"/>
</dbReference>
<dbReference type="InterPro" id="IPR041355">
    <property type="entry name" value="Pre-SET_CXC"/>
</dbReference>
<dbReference type="InterPro" id="IPR001214">
    <property type="entry name" value="SET_dom"/>
</dbReference>
<dbReference type="InterPro" id="IPR046341">
    <property type="entry name" value="SET_dom_sf"/>
</dbReference>
<dbReference type="InterPro" id="IPR033467">
    <property type="entry name" value="Tesmin/TSO1-like_CXC"/>
</dbReference>
<dbReference type="PANTHER" id="PTHR45747">
    <property type="entry name" value="HISTONE-LYSINE N-METHYLTRANSFERASE E(Z)"/>
    <property type="match status" value="1"/>
</dbReference>
<dbReference type="PANTHER" id="PTHR45747:SF4">
    <property type="entry name" value="HISTONE-LYSINE N-METHYLTRANSFERASE E(Z)"/>
    <property type="match status" value="1"/>
</dbReference>
<dbReference type="Pfam" id="PF18264">
    <property type="entry name" value="preSET_CXC"/>
    <property type="match status" value="1"/>
</dbReference>
<dbReference type="Pfam" id="PF00856">
    <property type="entry name" value="SET"/>
    <property type="match status" value="1"/>
</dbReference>
<dbReference type="SMART" id="SM01114">
    <property type="entry name" value="CXC"/>
    <property type="match status" value="1"/>
</dbReference>
<dbReference type="SMART" id="SM00317">
    <property type="entry name" value="SET"/>
    <property type="match status" value="1"/>
</dbReference>
<dbReference type="SUPFAM" id="SSF82199">
    <property type="entry name" value="SET domain"/>
    <property type="match status" value="1"/>
</dbReference>
<dbReference type="PROSITE" id="PS51633">
    <property type="entry name" value="CXC"/>
    <property type="match status" value="1"/>
</dbReference>
<dbReference type="PROSITE" id="PS51576">
    <property type="entry name" value="SAM_MT43_EZ"/>
    <property type="match status" value="1"/>
</dbReference>
<dbReference type="PROSITE" id="PS50280">
    <property type="entry name" value="SET"/>
    <property type="match status" value="1"/>
</dbReference>
<feature type="chain" id="PRO_0000444465" description="Histone-lysine N-methyltransferase CLF">
    <location>
        <begin position="1"/>
        <end position="896"/>
    </location>
</feature>
<feature type="domain" description="CXC" evidence="3">
    <location>
        <begin position="633"/>
        <end position="732"/>
    </location>
</feature>
<feature type="domain" description="SET" evidence="1">
    <location>
        <begin position="747"/>
        <end position="862"/>
    </location>
</feature>
<feature type="region of interest" description="Disordered" evidence="4">
    <location>
        <begin position="344"/>
        <end position="419"/>
    </location>
</feature>
<feature type="region of interest" description="Disordered" evidence="4">
    <location>
        <begin position="459"/>
        <end position="514"/>
    </location>
</feature>
<feature type="region of interest" description="Disordered" evidence="4">
    <location>
        <begin position="869"/>
        <end position="896"/>
    </location>
</feature>
<feature type="compositionally biased region" description="Low complexity" evidence="4">
    <location>
        <begin position="358"/>
        <end position="390"/>
    </location>
</feature>
<feature type="compositionally biased region" description="Polar residues" evidence="4">
    <location>
        <begin position="391"/>
        <end position="400"/>
    </location>
</feature>
<feature type="compositionally biased region" description="Polar residues" evidence="4">
    <location>
        <begin position="465"/>
        <end position="476"/>
    </location>
</feature>
<feature type="compositionally biased region" description="Polar residues" evidence="4">
    <location>
        <begin position="485"/>
        <end position="498"/>
    </location>
</feature>
<feature type="compositionally biased region" description="Basic and acidic residues" evidence="4">
    <location>
        <begin position="504"/>
        <end position="514"/>
    </location>
</feature>
<feature type="compositionally biased region" description="Basic and acidic residues" evidence="4">
    <location>
        <begin position="869"/>
        <end position="884"/>
    </location>
</feature>
<feature type="binding site" evidence="1">
    <location>
        <position position="861"/>
    </location>
    <ligand>
        <name>S-adenosyl-L-methionine</name>
        <dbReference type="ChEBI" id="CHEBI:59789"/>
    </ligand>
</feature>
<organism>
    <name type="scientific">Oryza sativa subsp. japonica</name>
    <name type="common">Rice</name>
    <dbReference type="NCBI Taxonomy" id="39947"/>
    <lineage>
        <taxon>Eukaryota</taxon>
        <taxon>Viridiplantae</taxon>
        <taxon>Streptophyta</taxon>
        <taxon>Embryophyta</taxon>
        <taxon>Tracheophyta</taxon>
        <taxon>Spermatophyta</taxon>
        <taxon>Magnoliopsida</taxon>
        <taxon>Liliopsida</taxon>
        <taxon>Poales</taxon>
        <taxon>Poaceae</taxon>
        <taxon>BOP clade</taxon>
        <taxon>Oryzoideae</taxon>
        <taxon>Oryzeae</taxon>
        <taxon>Oryzinae</taxon>
        <taxon>Oryza</taxon>
        <taxon>Oryza sativa</taxon>
    </lineage>
</organism>
<name>CLF_ORYSJ</name>
<comment type="function">
    <text evidence="9 14">Polycomb group (PcG) protein. Catalytic subunit of some PcG multiprotein complex, which methylates 'Lys-27' of histone H3, leading to transcriptional repression of the affected target genes. PcG proteins act by forming multiprotein complexes, which are required to maintain the transcriptionally repressive state of homeotic genes throughout development. PcG proteins are not required to initiate repression, but to maintain it during later stages of development (Probable). Involved in the regulation of flowering. Represses flowering under long day (LD) conditions. Regulates the trimethylation on histone H3 'Lys-27' (H3K27me3) of the flowering regulators MADS14, MADS15, RFT1, EHD1, HD3A and LF (PubMed:25400654).</text>
</comment>
<comment type="catalytic activity">
    <reaction evidence="2">
        <text>L-lysyl(27)-[histone H3] + 3 S-adenosyl-L-methionine = N(6),N(6),N(6)-trimethyl-L-lysyl(27)-[histone H3] + 3 S-adenosyl-L-homocysteine + 3 H(+)</text>
        <dbReference type="Rhea" id="RHEA:60292"/>
        <dbReference type="Rhea" id="RHEA-COMP:15535"/>
        <dbReference type="Rhea" id="RHEA-COMP:15548"/>
        <dbReference type="ChEBI" id="CHEBI:15378"/>
        <dbReference type="ChEBI" id="CHEBI:29969"/>
        <dbReference type="ChEBI" id="CHEBI:57856"/>
        <dbReference type="ChEBI" id="CHEBI:59789"/>
        <dbReference type="ChEBI" id="CHEBI:61961"/>
        <dbReference type="EC" id="2.1.1.356"/>
    </reaction>
</comment>
<comment type="subunit">
    <text evidence="6 7">Interacts with FIE1 (PubMed:23150632). Component of the polycomb repressive complex 2 (PRC2), composed of the core PRC2 components FIE2, EMF2B and EZ1. PRC2 methylates 'Lys-27' residues of histone H3 (H3K27me3), leading to transcriptional repression of the affected target gene (PubMed:23505380).</text>
</comment>
<comment type="tissue specificity">
    <text evidence="5 8">Widely expressed (PubMed:19825651). Highly expressed in young panicle (PubMed:23762371).</text>
</comment>
<comment type="miscellaneous">
    <text evidence="9">Over-expression and down-regulation of CLF respectively, represses and promotes flowering in long day (LD), but has no effect in short day (SD).</text>
</comment>
<comment type="similarity">
    <text evidence="2">Belongs to the class V-like SAM-binding methyltransferase superfamily. Histone-lysine methyltransferase family. EZ subfamily.</text>
</comment>
<reference key="1">
    <citation type="journal article" date="2005" name="Nature">
        <title>The map-based sequence of the rice genome.</title>
        <authorList>
            <consortium name="International rice genome sequencing project (IRGSP)"/>
        </authorList>
    </citation>
    <scope>NUCLEOTIDE SEQUENCE [LARGE SCALE GENOMIC DNA]</scope>
    <source>
        <strain>cv. Nipponbare</strain>
    </source>
</reference>
<reference key="2">
    <citation type="journal article" date="2008" name="Nucleic Acids Res.">
        <title>The rice annotation project database (RAP-DB): 2008 update.</title>
        <authorList>
            <consortium name="The rice annotation project (RAP)"/>
        </authorList>
    </citation>
    <scope>GENOME REANNOTATION</scope>
    <source>
        <strain>cv. Nipponbare</strain>
    </source>
</reference>
<reference key="3">
    <citation type="journal article" date="2013" name="Rice">
        <title>Improvement of the Oryza sativa Nipponbare reference genome using next generation sequence and optical map data.</title>
        <authorList>
            <person name="Kawahara Y."/>
            <person name="de la Bastide M."/>
            <person name="Hamilton J.P."/>
            <person name="Kanamori H."/>
            <person name="McCombie W.R."/>
            <person name="Ouyang S."/>
            <person name="Schwartz D.C."/>
            <person name="Tanaka T."/>
            <person name="Wu J."/>
            <person name="Zhou S."/>
            <person name="Childs K.L."/>
            <person name="Davidson R.M."/>
            <person name="Lin H."/>
            <person name="Quesada-Ocampo L."/>
            <person name="Vaillancourt B."/>
            <person name="Sakai H."/>
            <person name="Lee S.S."/>
            <person name="Kim J."/>
            <person name="Numa H."/>
            <person name="Itoh T."/>
            <person name="Buell C.R."/>
            <person name="Matsumoto T."/>
        </authorList>
    </citation>
    <scope>GENOME REANNOTATION</scope>
    <source>
        <strain>cv. Nipponbare</strain>
    </source>
</reference>
<reference key="4">
    <citation type="journal article" date="2009" name="Mol. Plant">
        <title>Expression, imprinting, and evolution of rice homologs of the polycomb group genes.</title>
        <authorList>
            <person name="Luo M."/>
            <person name="Platten D."/>
            <person name="Chaudhury A."/>
            <person name="Peacock W.J."/>
            <person name="Dennis E.S."/>
        </authorList>
    </citation>
    <scope>TISSUE SPECIFICITY</scope>
</reference>
<reference key="5">
    <citation type="journal article" date="2012" name="Plant Cell">
        <title>Identification and characterization of an epi-allele of FIE1 reveals a regulatory linkage between two epigenetic marks in rice.</title>
        <authorList>
            <person name="Zhang L."/>
            <person name="Cheng Z."/>
            <person name="Qin R."/>
            <person name="Qiu Y."/>
            <person name="Wang J.L."/>
            <person name="Cui X."/>
            <person name="Gu L."/>
            <person name="Zhang X."/>
            <person name="Guo X."/>
            <person name="Wang D."/>
            <person name="Jiang L."/>
            <person name="Wu C.Y."/>
            <person name="Wang H."/>
            <person name="Cao X."/>
            <person name="Wan J."/>
        </authorList>
    </citation>
    <scope>INTERACTION WITH FIE1</scope>
</reference>
<reference key="6">
    <citation type="journal article" date="2013" name="PLoS Genet.">
        <title>Polycomb group gene OsFIE2 regulates rice (Oryza sativa) seed development and grain filling via a mechanism distinct from Arabidopsis.</title>
        <authorList>
            <person name="Nallamilli B.R."/>
            <person name="Zhang J."/>
            <person name="Mujahid H."/>
            <person name="Malone B.M."/>
            <person name="Bridges S.M."/>
            <person name="Peng Z."/>
        </authorList>
    </citation>
    <scope>IDENTIFICATION BY MASS SPECTROMETRY</scope>
    <scope>SUBUNIT</scope>
</reference>
<reference key="7">
    <citation type="journal article" date="2013" name="PLoS ONE">
        <title>Genome-wide identification, phylogenetic and co-expression analysis of OsSET gene family in rice.</title>
        <authorList>
            <person name="Lu Z."/>
            <person name="Huang X."/>
            <person name="Ouyang Y."/>
            <person name="Yao J."/>
        </authorList>
    </citation>
    <scope>TISSUE SPECIFICITY</scope>
    <scope>GENE FAMILY</scope>
    <scope>NOMENCLATURE</scope>
</reference>
<reference key="8">
    <citation type="journal article" date="2014" name="Front. Plant Sci.">
        <title>The rice enhancer of zeste [E(z)] genes SDG711 and SDG718 are respectively involved in long day and short day signaling to mediate the accurate photoperiod control of flowering time.</title>
        <authorList>
            <person name="Liu X."/>
            <person name="Zhou C."/>
            <person name="Zhao Y."/>
            <person name="Zhou S."/>
            <person name="Wang W."/>
            <person name="Zhou D.X."/>
        </authorList>
    </citation>
    <scope>FUNCTION</scope>
</reference>
<protein>
    <recommendedName>
        <fullName evidence="13">Histone-lysine N-methyltransferase CLF</fullName>
        <shortName evidence="10">OsCLF</shortName>
        <ecNumber evidence="2">2.1.1.356</ecNumber>
    </recommendedName>
    <alternativeName>
        <fullName evidence="13">Protein SET DOMAIN GROUP 711</fullName>
    </alternativeName>
    <alternativeName>
        <fullName evidence="13">SET family protein 24</fullName>
        <shortName evidence="11">OsSET24</shortName>
    </alternativeName>
</protein>
<sequence length="896" mass="100296">MAGDSRNEPMFCEEGSSESGYVLCVIDSLKKKITSDRFVYIQKRVEENSIKLSPITLHSHNLSKNRQTSTSNSTDLVSNLLTKRKEDALCAVNSRESSPDESEGANCQDECSSTVIVGGNLSARNSVRPIRLPEVATLPPYTTWIFLDRNQRMQEDQSVLGRRRIYYDTNCGEALICSDSEDEAVEDEEEKKEFKDSEDCIIRMTIQECGMSDAVLETLARDIERAPDDIKARYEILQGEKPEGSSKKVSELNVKMEDVYGDKDLDAALDSFDNLFCRRCLVFDCKLHGCSQDLVFPTEKQAPLCSSDEGTPCGIHCYKLVSKPDAIMEIDSHLLVDVEEPTSDNLKDQIGSNKKKLGSSGQKTKSQQSESSSTARVSSESSESEVQLLSNKSPQHSPGLSKNKLGAKGGIKKSTNRRIAERILMSVKKGQQEMSPDSNSIVNGCHWPRDMKLRSDTRSGIKDSVVSSQCNSPSTRSFRKKGTLQMENNSSFVDAQSDSMEDTNNEHSATDGCDSSRKEECVDESICRQEAHGRSWKVIEQGLLLKGLEIFGKNSCLIARNLLGGMKTCTDVFQYMNYIENSSASGALSGVDSLVKGYMKGNELRTRSRFVRRRGRVRRLKYTWKTAGYHFIRKRITERKDQPCRQYTPCGCQSACGKQCPCLTNGTCCEKYCGCPKMCKNRFRGCHCAKSQCRSRQCPCFAADRECDPDVCRNCWVGCGDGTLGVPNQRGDNYECRNMKLLLKQQQRVLLGRSDVSGWGAFLKNSVGKHEYLGEYTGELISHKEADKRGKIYDRENSSFLFNLNNEYVLDAYRMGDKLKFANHSPDPNCYAKVIMVAGDHRVGIFAKERISAGEELFYDYRYEPDRAPAWARKPEGPGAKDDAQPSTGRAKKLAH</sequence>